<dbReference type="EC" id="6.3.1.21" evidence="1"/>
<dbReference type="EMBL" id="AE013598">
    <property type="protein sequence ID" value="AAW76773.1"/>
    <property type="status" value="ALT_INIT"/>
    <property type="molecule type" value="Genomic_DNA"/>
</dbReference>
<dbReference type="SMR" id="Q5GWZ8"/>
<dbReference type="STRING" id="291331.XOO3519"/>
<dbReference type="KEGG" id="xoo:XOO3519"/>
<dbReference type="HOGENOM" id="CLU_011534_1_3_6"/>
<dbReference type="UniPathway" id="UPA00074">
    <property type="reaction ID" value="UER00127"/>
</dbReference>
<dbReference type="Proteomes" id="UP000006735">
    <property type="component" value="Chromosome"/>
</dbReference>
<dbReference type="GO" id="GO:0005829">
    <property type="term" value="C:cytosol"/>
    <property type="evidence" value="ECO:0007669"/>
    <property type="project" value="TreeGrafter"/>
</dbReference>
<dbReference type="GO" id="GO:0005524">
    <property type="term" value="F:ATP binding"/>
    <property type="evidence" value="ECO:0007669"/>
    <property type="project" value="UniProtKB-UniRule"/>
</dbReference>
<dbReference type="GO" id="GO:0000287">
    <property type="term" value="F:magnesium ion binding"/>
    <property type="evidence" value="ECO:0007669"/>
    <property type="project" value="InterPro"/>
</dbReference>
<dbReference type="GO" id="GO:0043815">
    <property type="term" value="F:phosphoribosylglycinamide formyltransferase 2 activity"/>
    <property type="evidence" value="ECO:0007669"/>
    <property type="project" value="UniProtKB-UniRule"/>
</dbReference>
<dbReference type="GO" id="GO:0004644">
    <property type="term" value="F:phosphoribosylglycinamide formyltransferase activity"/>
    <property type="evidence" value="ECO:0007669"/>
    <property type="project" value="InterPro"/>
</dbReference>
<dbReference type="GO" id="GO:0006189">
    <property type="term" value="P:'de novo' IMP biosynthetic process"/>
    <property type="evidence" value="ECO:0007669"/>
    <property type="project" value="UniProtKB-UniRule"/>
</dbReference>
<dbReference type="FunFam" id="3.30.1490.20:FF:000013">
    <property type="entry name" value="Formate-dependent phosphoribosylglycinamide formyltransferase"/>
    <property type="match status" value="1"/>
</dbReference>
<dbReference type="FunFam" id="3.30.470.20:FF:000027">
    <property type="entry name" value="Formate-dependent phosphoribosylglycinamide formyltransferase"/>
    <property type="match status" value="1"/>
</dbReference>
<dbReference type="FunFam" id="3.40.50.20:FF:000007">
    <property type="entry name" value="Formate-dependent phosphoribosylglycinamide formyltransferase"/>
    <property type="match status" value="1"/>
</dbReference>
<dbReference type="Gene3D" id="3.40.50.20">
    <property type="match status" value="1"/>
</dbReference>
<dbReference type="Gene3D" id="3.30.1490.20">
    <property type="entry name" value="ATP-grasp fold, A domain"/>
    <property type="match status" value="1"/>
</dbReference>
<dbReference type="Gene3D" id="3.30.470.20">
    <property type="entry name" value="ATP-grasp fold, B domain"/>
    <property type="match status" value="1"/>
</dbReference>
<dbReference type="HAMAP" id="MF_01643">
    <property type="entry name" value="PurT"/>
    <property type="match status" value="1"/>
</dbReference>
<dbReference type="InterPro" id="IPR011761">
    <property type="entry name" value="ATP-grasp"/>
</dbReference>
<dbReference type="InterPro" id="IPR003135">
    <property type="entry name" value="ATP-grasp_carboxylate-amine"/>
</dbReference>
<dbReference type="InterPro" id="IPR013815">
    <property type="entry name" value="ATP_grasp_subdomain_1"/>
</dbReference>
<dbReference type="InterPro" id="IPR016185">
    <property type="entry name" value="PreATP-grasp_dom_sf"/>
</dbReference>
<dbReference type="InterPro" id="IPR005862">
    <property type="entry name" value="PurT"/>
</dbReference>
<dbReference type="InterPro" id="IPR054350">
    <property type="entry name" value="PurT/PurK_preATP-grasp"/>
</dbReference>
<dbReference type="InterPro" id="IPR048740">
    <property type="entry name" value="PurT_C"/>
</dbReference>
<dbReference type="InterPro" id="IPR011054">
    <property type="entry name" value="Rudment_hybrid_motif"/>
</dbReference>
<dbReference type="NCBIfam" id="NF006766">
    <property type="entry name" value="PRK09288.1"/>
    <property type="match status" value="1"/>
</dbReference>
<dbReference type="NCBIfam" id="TIGR01142">
    <property type="entry name" value="purT"/>
    <property type="match status" value="1"/>
</dbReference>
<dbReference type="PANTHER" id="PTHR43055">
    <property type="entry name" value="FORMATE-DEPENDENT PHOSPHORIBOSYLGLYCINAMIDE FORMYLTRANSFERASE"/>
    <property type="match status" value="1"/>
</dbReference>
<dbReference type="PANTHER" id="PTHR43055:SF1">
    <property type="entry name" value="FORMATE-DEPENDENT PHOSPHORIBOSYLGLYCINAMIDE FORMYLTRANSFERASE"/>
    <property type="match status" value="1"/>
</dbReference>
<dbReference type="Pfam" id="PF02222">
    <property type="entry name" value="ATP-grasp"/>
    <property type="match status" value="1"/>
</dbReference>
<dbReference type="Pfam" id="PF21244">
    <property type="entry name" value="PurT_C"/>
    <property type="match status" value="1"/>
</dbReference>
<dbReference type="Pfam" id="PF22660">
    <property type="entry name" value="RS_preATP-grasp-like"/>
    <property type="match status" value="1"/>
</dbReference>
<dbReference type="SUPFAM" id="SSF56059">
    <property type="entry name" value="Glutathione synthetase ATP-binding domain-like"/>
    <property type="match status" value="1"/>
</dbReference>
<dbReference type="SUPFAM" id="SSF52440">
    <property type="entry name" value="PreATP-grasp domain"/>
    <property type="match status" value="1"/>
</dbReference>
<dbReference type="SUPFAM" id="SSF51246">
    <property type="entry name" value="Rudiment single hybrid motif"/>
    <property type="match status" value="1"/>
</dbReference>
<dbReference type="PROSITE" id="PS50975">
    <property type="entry name" value="ATP_GRASP"/>
    <property type="match status" value="1"/>
</dbReference>
<protein>
    <recommendedName>
        <fullName evidence="1">Formate-dependent phosphoribosylglycinamide formyltransferase</fullName>
        <ecNumber evidence="1">6.3.1.21</ecNumber>
    </recommendedName>
    <alternativeName>
        <fullName evidence="1">5'-phosphoribosylglycinamide transformylase 2</fullName>
    </alternativeName>
    <alternativeName>
        <fullName evidence="1">Formate-dependent GAR transformylase</fullName>
    </alternativeName>
    <alternativeName>
        <fullName evidence="1">GAR transformylase 2</fullName>
        <shortName evidence="1">GART 2</shortName>
    </alternativeName>
    <alternativeName>
        <fullName evidence="1">Non-folate glycinamide ribonucleotide transformylase</fullName>
    </alternativeName>
    <alternativeName>
        <fullName evidence="1">Phosphoribosylglycinamide formyltransferase 2</fullName>
    </alternativeName>
</protein>
<evidence type="ECO:0000255" key="1">
    <source>
        <dbReference type="HAMAP-Rule" id="MF_01643"/>
    </source>
</evidence>
<evidence type="ECO:0000305" key="2"/>
<name>PURT_XANOR</name>
<reference key="1">
    <citation type="journal article" date="2005" name="Nucleic Acids Res.">
        <title>The genome sequence of Xanthomonas oryzae pathovar oryzae KACC10331, the bacterial blight pathogen of rice.</title>
        <authorList>
            <person name="Lee B.-M."/>
            <person name="Park Y.-J."/>
            <person name="Park D.-S."/>
            <person name="Kang H.-W."/>
            <person name="Kim J.-G."/>
            <person name="Song E.-S."/>
            <person name="Park I.-C."/>
            <person name="Yoon U.-H."/>
            <person name="Hahn J.-H."/>
            <person name="Koo B.-S."/>
            <person name="Lee G.-B."/>
            <person name="Kim H."/>
            <person name="Park H.-S."/>
            <person name="Yoon K.-O."/>
            <person name="Kim J.-H."/>
            <person name="Jung C.-H."/>
            <person name="Koh N.-H."/>
            <person name="Seo J.-S."/>
            <person name="Go S.-J."/>
        </authorList>
    </citation>
    <scope>NUCLEOTIDE SEQUENCE [LARGE SCALE GENOMIC DNA]</scope>
    <source>
        <strain>KACC10331 / KXO85</strain>
    </source>
</reference>
<feature type="chain" id="PRO_0000319268" description="Formate-dependent phosphoribosylglycinamide formyltransferase">
    <location>
        <begin position="1"/>
        <end position="400"/>
    </location>
</feature>
<feature type="domain" description="ATP-grasp" evidence="1">
    <location>
        <begin position="120"/>
        <end position="309"/>
    </location>
</feature>
<feature type="binding site" evidence="1">
    <location>
        <begin position="22"/>
        <end position="23"/>
    </location>
    <ligand>
        <name>N(1)-(5-phospho-beta-D-ribosyl)glycinamide</name>
        <dbReference type="ChEBI" id="CHEBI:143788"/>
    </ligand>
</feature>
<feature type="binding site" evidence="1">
    <location>
        <position position="82"/>
    </location>
    <ligand>
        <name>N(1)-(5-phospho-beta-D-ribosyl)glycinamide</name>
        <dbReference type="ChEBI" id="CHEBI:143788"/>
    </ligand>
</feature>
<feature type="binding site" evidence="1">
    <location>
        <position position="115"/>
    </location>
    <ligand>
        <name>ATP</name>
        <dbReference type="ChEBI" id="CHEBI:30616"/>
    </ligand>
</feature>
<feature type="binding site" evidence="1">
    <location>
        <position position="156"/>
    </location>
    <ligand>
        <name>ATP</name>
        <dbReference type="ChEBI" id="CHEBI:30616"/>
    </ligand>
</feature>
<feature type="binding site" evidence="1">
    <location>
        <begin position="161"/>
        <end position="166"/>
    </location>
    <ligand>
        <name>ATP</name>
        <dbReference type="ChEBI" id="CHEBI:30616"/>
    </ligand>
</feature>
<feature type="binding site" evidence="1">
    <location>
        <begin position="196"/>
        <end position="199"/>
    </location>
    <ligand>
        <name>ATP</name>
        <dbReference type="ChEBI" id="CHEBI:30616"/>
    </ligand>
</feature>
<feature type="binding site" evidence="1">
    <location>
        <position position="204"/>
    </location>
    <ligand>
        <name>ATP</name>
        <dbReference type="ChEBI" id="CHEBI:30616"/>
    </ligand>
</feature>
<feature type="binding site" evidence="1">
    <location>
        <position position="268"/>
    </location>
    <ligand>
        <name>Mg(2+)</name>
        <dbReference type="ChEBI" id="CHEBI:18420"/>
    </ligand>
</feature>
<feature type="binding site" evidence="1">
    <location>
        <position position="280"/>
    </location>
    <ligand>
        <name>Mg(2+)</name>
        <dbReference type="ChEBI" id="CHEBI:18420"/>
    </ligand>
</feature>
<feature type="binding site" evidence="1">
    <location>
        <position position="287"/>
    </location>
    <ligand>
        <name>N(1)-(5-phospho-beta-D-ribosyl)glycinamide</name>
        <dbReference type="ChEBI" id="CHEBI:143788"/>
    </ligand>
</feature>
<feature type="binding site" evidence="1">
    <location>
        <position position="361"/>
    </location>
    <ligand>
        <name>N(1)-(5-phospho-beta-D-ribosyl)glycinamide</name>
        <dbReference type="ChEBI" id="CHEBI:143788"/>
    </ligand>
</feature>
<feature type="binding site" evidence="1">
    <location>
        <begin position="368"/>
        <end position="369"/>
    </location>
    <ligand>
        <name>N(1)-(5-phospho-beta-D-ribosyl)glycinamide</name>
        <dbReference type="ChEBI" id="CHEBI:143788"/>
    </ligand>
</feature>
<organism>
    <name type="scientific">Xanthomonas oryzae pv. oryzae (strain KACC10331 / KXO85)</name>
    <dbReference type="NCBI Taxonomy" id="291331"/>
    <lineage>
        <taxon>Bacteria</taxon>
        <taxon>Pseudomonadati</taxon>
        <taxon>Pseudomonadota</taxon>
        <taxon>Gammaproteobacteria</taxon>
        <taxon>Lysobacterales</taxon>
        <taxon>Lysobacteraceae</taxon>
        <taxon>Xanthomonas</taxon>
    </lineage>
</organism>
<accession>Q5GWZ8</accession>
<gene>
    <name evidence="1" type="primary">purT</name>
    <name type="ordered locus">XOO3519</name>
</gene>
<keyword id="KW-0067">ATP-binding</keyword>
<keyword id="KW-0436">Ligase</keyword>
<keyword id="KW-0460">Magnesium</keyword>
<keyword id="KW-0479">Metal-binding</keyword>
<keyword id="KW-0547">Nucleotide-binding</keyword>
<keyword id="KW-0658">Purine biosynthesis</keyword>
<keyword id="KW-1185">Reference proteome</keyword>
<comment type="function">
    <text evidence="1">Involved in the de novo purine biosynthesis. Catalyzes the transfer of formate to 5-phospho-ribosyl-glycinamide (GAR), producing 5-phospho-ribosyl-N-formylglycinamide (FGAR). Formate is provided by PurU via hydrolysis of 10-formyl-tetrahydrofolate.</text>
</comment>
<comment type="catalytic activity">
    <reaction evidence="1">
        <text>N(1)-(5-phospho-beta-D-ribosyl)glycinamide + formate + ATP = N(2)-formyl-N(1)-(5-phospho-beta-D-ribosyl)glycinamide + ADP + phosphate + H(+)</text>
        <dbReference type="Rhea" id="RHEA:24829"/>
        <dbReference type="ChEBI" id="CHEBI:15378"/>
        <dbReference type="ChEBI" id="CHEBI:15740"/>
        <dbReference type="ChEBI" id="CHEBI:30616"/>
        <dbReference type="ChEBI" id="CHEBI:43474"/>
        <dbReference type="ChEBI" id="CHEBI:143788"/>
        <dbReference type="ChEBI" id="CHEBI:147286"/>
        <dbReference type="ChEBI" id="CHEBI:456216"/>
        <dbReference type="EC" id="6.3.1.21"/>
    </reaction>
    <physiologicalReaction direction="left-to-right" evidence="1">
        <dbReference type="Rhea" id="RHEA:24830"/>
    </physiologicalReaction>
</comment>
<comment type="pathway">
    <text evidence="1">Purine metabolism; IMP biosynthesis via de novo pathway; N(2)-formyl-N(1)-(5-phospho-D-ribosyl)glycinamide from N(1)-(5-phospho-D-ribosyl)glycinamide (formate route): step 1/1.</text>
</comment>
<comment type="subunit">
    <text evidence="1">Homodimer.</text>
</comment>
<comment type="similarity">
    <text evidence="1">Belongs to the PurK/PurT family.</text>
</comment>
<comment type="sequence caution" evidence="2">
    <conflict type="erroneous initiation">
        <sequence resource="EMBL-CDS" id="AAW76773"/>
    </conflict>
</comment>
<proteinExistence type="inferred from homology"/>
<sequence>MTTLGTPLSPSATRVLLLGSGELGKEVAIELQRFGVEVIAADRYANAPAMQVAHRSHVLDMLDPAALRVLIASERPHVIVPEIEAIHTETLVALEREQGQKVIPAARAARLTMDREGIRRLAAETLGLPTSPYRFVDTAADYREAIAAVGLPCVVKPVMSSSGKGQSTLRSEADIDAAWEYAQTGGRAGAGRCIVEGFIDFDYEITLLTVRHAGGTSYCDPIGHWQQDGDYRESWQPQPMSAAALRRSQEIAKAITDDLGGWGLFGVELFVKGDEVWFSEVSPRPHDTGLVTLVSQELSEFALHARAILGLPVGAEDGGVIGQSGPSASCALLAHGNGVPVFDNVADALRDPNTALRLFGKPRVDGHRRVGVTLARADSIDAAREKARVAAAALGIQLTA</sequence>